<name>CATL2_HUMAN</name>
<reference key="1">
    <citation type="journal article" date="1998" name="Cancer Res.">
        <title>Cathepsin L2, a novel human cysteine proteinase produced by breast and colorectal carcinomas.</title>
        <authorList>
            <person name="Santamaria I."/>
            <person name="Velasco G."/>
            <person name="Cazorla M."/>
            <person name="Fueyo A."/>
            <person name="Campo E."/>
            <person name="Lopez-Otin C."/>
        </authorList>
    </citation>
    <scope>NUCLEOTIDE SEQUENCE [MRNA]</scope>
    <scope>TISSUE SPECIFICITY</scope>
    <source>
        <tissue>Brain</tissue>
    </source>
</reference>
<reference key="2">
    <citation type="journal article" date="1998" name="Invest. Ophthalmol. Vis. Sci.">
        <title>Isolation and characterization of human cathepsin V: a major proteinase in corneal epithelium.</title>
        <authorList>
            <person name="Adachi W."/>
            <person name="Kawamoto S."/>
            <person name="Ohno I."/>
            <person name="Nishida K."/>
            <person name="Kinoshita S."/>
            <person name="Matsubara K."/>
            <person name="Okubo K."/>
        </authorList>
    </citation>
    <scope>NUCLEOTIDE SEQUENCE [MRNA]</scope>
    <scope>FUNCTION</scope>
    <scope>TISSUE SPECIFICITY</scope>
    <source>
        <tissue>Corneal epithelium</tissue>
    </source>
</reference>
<reference key="3">
    <citation type="journal article" date="1999" name="Biochemistry">
        <title>Human cathepsin V functional expression, tissue distribution, electrostatic surface potential, enzymatic characterization, and chromosomal localization.</title>
        <authorList>
            <person name="Broemme D."/>
            <person name="Li Z."/>
            <person name="Barnes M."/>
            <person name="Mehler E."/>
        </authorList>
    </citation>
    <scope>NUCLEOTIDE SEQUENCE [MRNA]</scope>
    <scope>FUNCTION</scope>
    <scope>CATALYTIC ACTIVITY</scope>
    <scope>TISSUE SPECIFICITY</scope>
    <source>
        <tissue>Kidney</tissue>
        <tissue>Thymus</tissue>
    </source>
</reference>
<reference key="4">
    <citation type="journal article" date="1999" name="DNA Res.">
        <title>Genomic organization and chromosomal localization of the human cathepsin L2 gene.</title>
        <authorList>
            <person name="Itoh R."/>
            <person name="Kawamoto S."/>
            <person name="Adachi W."/>
            <person name="Kinoshita S."/>
            <person name="Okubo K."/>
        </authorList>
    </citation>
    <scope>NUCLEOTIDE SEQUENCE [GENOMIC DNA]</scope>
</reference>
<reference key="5">
    <citation type="journal article" date="2003" name="Genome Res.">
        <title>The secreted protein discovery initiative (SPDI), a large-scale effort to identify novel human secreted and transmembrane proteins: a bioinformatics assessment.</title>
        <authorList>
            <person name="Clark H.F."/>
            <person name="Gurney A.L."/>
            <person name="Abaya E."/>
            <person name="Baker K."/>
            <person name="Baldwin D.T."/>
            <person name="Brush J."/>
            <person name="Chen J."/>
            <person name="Chow B."/>
            <person name="Chui C."/>
            <person name="Crowley C."/>
            <person name="Currell B."/>
            <person name="Deuel B."/>
            <person name="Dowd P."/>
            <person name="Eaton D."/>
            <person name="Foster J.S."/>
            <person name="Grimaldi C."/>
            <person name="Gu Q."/>
            <person name="Hass P.E."/>
            <person name="Heldens S."/>
            <person name="Huang A."/>
            <person name="Kim H.S."/>
            <person name="Klimowski L."/>
            <person name="Jin Y."/>
            <person name="Johnson S."/>
            <person name="Lee J."/>
            <person name="Lewis L."/>
            <person name="Liao D."/>
            <person name="Mark M.R."/>
            <person name="Robbie E."/>
            <person name="Sanchez C."/>
            <person name="Schoenfeld J."/>
            <person name="Seshagiri S."/>
            <person name="Simmons L."/>
            <person name="Singh J."/>
            <person name="Smith V."/>
            <person name="Stinson J."/>
            <person name="Vagts A."/>
            <person name="Vandlen R.L."/>
            <person name="Watanabe C."/>
            <person name="Wieand D."/>
            <person name="Woods K."/>
            <person name="Xie M.-H."/>
            <person name="Yansura D.G."/>
            <person name="Yi S."/>
            <person name="Yu G."/>
            <person name="Yuan J."/>
            <person name="Zhang M."/>
            <person name="Zhang Z."/>
            <person name="Goddard A.D."/>
            <person name="Wood W.I."/>
            <person name="Godowski P.J."/>
            <person name="Gray A.M."/>
        </authorList>
    </citation>
    <scope>NUCLEOTIDE SEQUENCE [LARGE SCALE MRNA]</scope>
</reference>
<reference key="6">
    <citation type="journal article" date="2004" name="Nature">
        <title>DNA sequence and analysis of human chromosome 9.</title>
        <authorList>
            <person name="Humphray S.J."/>
            <person name="Oliver K."/>
            <person name="Hunt A.R."/>
            <person name="Plumb R.W."/>
            <person name="Loveland J.E."/>
            <person name="Howe K.L."/>
            <person name="Andrews T.D."/>
            <person name="Searle S."/>
            <person name="Hunt S.E."/>
            <person name="Scott C.E."/>
            <person name="Jones M.C."/>
            <person name="Ainscough R."/>
            <person name="Almeida J.P."/>
            <person name="Ambrose K.D."/>
            <person name="Ashwell R.I.S."/>
            <person name="Babbage A.K."/>
            <person name="Babbage S."/>
            <person name="Bagguley C.L."/>
            <person name="Bailey J."/>
            <person name="Banerjee R."/>
            <person name="Barker D.J."/>
            <person name="Barlow K.F."/>
            <person name="Bates K."/>
            <person name="Beasley H."/>
            <person name="Beasley O."/>
            <person name="Bird C.P."/>
            <person name="Bray-Allen S."/>
            <person name="Brown A.J."/>
            <person name="Brown J.Y."/>
            <person name="Burford D."/>
            <person name="Burrill W."/>
            <person name="Burton J."/>
            <person name="Carder C."/>
            <person name="Carter N.P."/>
            <person name="Chapman J.C."/>
            <person name="Chen Y."/>
            <person name="Clarke G."/>
            <person name="Clark S.Y."/>
            <person name="Clee C.M."/>
            <person name="Clegg S."/>
            <person name="Collier R.E."/>
            <person name="Corby N."/>
            <person name="Crosier M."/>
            <person name="Cummings A.T."/>
            <person name="Davies J."/>
            <person name="Dhami P."/>
            <person name="Dunn M."/>
            <person name="Dutta I."/>
            <person name="Dyer L.W."/>
            <person name="Earthrowl M.E."/>
            <person name="Faulkner L."/>
            <person name="Fleming C.J."/>
            <person name="Frankish A."/>
            <person name="Frankland J.A."/>
            <person name="French L."/>
            <person name="Fricker D.G."/>
            <person name="Garner P."/>
            <person name="Garnett J."/>
            <person name="Ghori J."/>
            <person name="Gilbert J.G.R."/>
            <person name="Glison C."/>
            <person name="Grafham D.V."/>
            <person name="Gribble S."/>
            <person name="Griffiths C."/>
            <person name="Griffiths-Jones S."/>
            <person name="Grocock R."/>
            <person name="Guy J."/>
            <person name="Hall R.E."/>
            <person name="Hammond S."/>
            <person name="Harley J.L."/>
            <person name="Harrison E.S.I."/>
            <person name="Hart E.A."/>
            <person name="Heath P.D."/>
            <person name="Henderson C.D."/>
            <person name="Hopkins B.L."/>
            <person name="Howard P.J."/>
            <person name="Howden P.J."/>
            <person name="Huckle E."/>
            <person name="Johnson C."/>
            <person name="Johnson D."/>
            <person name="Joy A.A."/>
            <person name="Kay M."/>
            <person name="Keenan S."/>
            <person name="Kershaw J.K."/>
            <person name="Kimberley A.M."/>
            <person name="King A."/>
            <person name="Knights A."/>
            <person name="Laird G.K."/>
            <person name="Langford C."/>
            <person name="Lawlor S."/>
            <person name="Leongamornlert D.A."/>
            <person name="Leversha M."/>
            <person name="Lloyd C."/>
            <person name="Lloyd D.M."/>
            <person name="Lovell J."/>
            <person name="Martin S."/>
            <person name="Mashreghi-Mohammadi M."/>
            <person name="Matthews L."/>
            <person name="McLaren S."/>
            <person name="McLay K.E."/>
            <person name="McMurray A."/>
            <person name="Milne S."/>
            <person name="Nickerson T."/>
            <person name="Nisbett J."/>
            <person name="Nordsiek G."/>
            <person name="Pearce A.V."/>
            <person name="Peck A.I."/>
            <person name="Porter K.M."/>
            <person name="Pandian R."/>
            <person name="Pelan S."/>
            <person name="Phillimore B."/>
            <person name="Povey S."/>
            <person name="Ramsey Y."/>
            <person name="Rand V."/>
            <person name="Scharfe M."/>
            <person name="Sehra H.K."/>
            <person name="Shownkeen R."/>
            <person name="Sims S.K."/>
            <person name="Skuce C.D."/>
            <person name="Smith M."/>
            <person name="Steward C.A."/>
            <person name="Swarbreck D."/>
            <person name="Sycamore N."/>
            <person name="Tester J."/>
            <person name="Thorpe A."/>
            <person name="Tracey A."/>
            <person name="Tromans A."/>
            <person name="Thomas D.W."/>
            <person name="Wall M."/>
            <person name="Wallis J.M."/>
            <person name="West A.P."/>
            <person name="Whitehead S.L."/>
            <person name="Willey D.L."/>
            <person name="Williams S.A."/>
            <person name="Wilming L."/>
            <person name="Wray P.W."/>
            <person name="Young L."/>
            <person name="Ashurst J.L."/>
            <person name="Coulson A."/>
            <person name="Blocker H."/>
            <person name="Durbin R.M."/>
            <person name="Sulston J.E."/>
            <person name="Hubbard T."/>
            <person name="Jackson M.J."/>
            <person name="Bentley D.R."/>
            <person name="Beck S."/>
            <person name="Rogers J."/>
            <person name="Dunham I."/>
        </authorList>
    </citation>
    <scope>NUCLEOTIDE SEQUENCE [LARGE SCALE GENOMIC DNA]</scope>
</reference>
<reference key="7">
    <citation type="journal article" date="2004" name="Genome Res.">
        <title>The status, quality, and expansion of the NIH full-length cDNA project: the Mammalian Gene Collection (MGC).</title>
        <authorList>
            <consortium name="The MGC Project Team"/>
        </authorList>
    </citation>
    <scope>NUCLEOTIDE SEQUENCE [LARGE SCALE MRNA]</scope>
</reference>
<reference key="8">
    <citation type="journal article" date="2012" name="FEBS Lett.">
        <title>Determination of cathepsin V activity and intracellular trafficking by N-glycosylation.</title>
        <authorList>
            <person name="Niwa Y."/>
            <person name="Suzuki T."/>
            <person name="Dohmae N."/>
            <person name="Umezawa K."/>
            <person name="Simizu S."/>
        </authorList>
    </citation>
    <scope>GLYCOSYLATION AT ASN-221 AND ASN-292</scope>
</reference>
<reference key="9">
    <citation type="journal article" date="2015" name="Proteomics">
        <title>N-terminome analysis of the human mitochondrial proteome.</title>
        <authorList>
            <person name="Vaca Jacome A.S."/>
            <person name="Rabilloud T."/>
            <person name="Schaeffer-Reiss C."/>
            <person name="Rompais M."/>
            <person name="Ayoub D."/>
            <person name="Lane L."/>
            <person name="Bairoch A."/>
            <person name="Van Dorsselaer A."/>
            <person name="Carapito C."/>
        </authorList>
    </citation>
    <scope>IDENTIFICATION BY MASS SPECTROMETRY [LARGE SCALE ANALYSIS]</scope>
</reference>
<reference key="10">
    <citation type="journal article" date="2000" name="Biochemistry">
        <title>Crystal structure of human cathepsin V.</title>
        <authorList>
            <person name="Somoza J.R."/>
            <person name="Zhan H."/>
            <person name="Bowman K.K."/>
            <person name="Yu L."/>
            <person name="Mortara K.D."/>
            <person name="Palmer J.T."/>
            <person name="Clark J.M."/>
            <person name="McGrath M.E."/>
        </authorList>
    </citation>
    <scope>X-RAY CRYSTALLOGRAPHY (1.6 ANGSTROMS)</scope>
    <scope>ACTIVE SITE</scope>
    <scope>DISULFIDE BONDS</scope>
</reference>
<reference key="11">
    <citation type="journal article" date="2001" name="Biochemistry">
        <authorList>
            <person name="Somoza J.R."/>
            <person name="Zhan H."/>
            <person name="Bowman K.K."/>
            <person name="Yu L."/>
            <person name="Mortara K.D."/>
            <person name="Palmer J.T."/>
            <person name="Clark J.M."/>
            <person name="McGrath M.E."/>
        </authorList>
    </citation>
    <scope>ERRATUM OF PUBMED:11027133</scope>
</reference>
<reference key="12">
    <citation type="journal article" date="2019" name="Genet. Med.">
        <title>Deficiency of the human cysteine protease inhibitor cystatin M/E causes hypotrichosis and dry skin.</title>
        <authorList>
            <person name="van den Bogaard E.H.J."/>
            <person name="van Geel M."/>
            <person name="van Vlijmen-Willems I.M.J.J."/>
            <person name="Jansen P.A.M."/>
            <person name="Peppelman M."/>
            <person name="van Erp P.E.J."/>
            <person name="Atalay S."/>
            <person name="Venselaar H."/>
            <person name="Simon M.E.H."/>
            <person name="Joosten M."/>
            <person name="Schalkwijk J."/>
            <person name="Zeeuwen P.L.J.M."/>
        </authorList>
    </citation>
    <scope>ACTIVITY REGULATION</scope>
</reference>
<evidence type="ECO:0000255" key="1"/>
<evidence type="ECO:0000255" key="2">
    <source>
        <dbReference type="PROSITE-ProRule" id="PRU10088"/>
    </source>
</evidence>
<evidence type="ECO:0000255" key="3">
    <source>
        <dbReference type="PROSITE-ProRule" id="PRU10089"/>
    </source>
</evidence>
<evidence type="ECO:0000255" key="4">
    <source>
        <dbReference type="PROSITE-ProRule" id="PRU10090"/>
    </source>
</evidence>
<evidence type="ECO:0000269" key="5">
    <source>
    </source>
</evidence>
<evidence type="ECO:0000269" key="6">
    <source>
    </source>
</evidence>
<evidence type="ECO:0000269" key="7">
    <source>
    </source>
</evidence>
<evidence type="ECO:0000269" key="8">
    <source>
    </source>
</evidence>
<evidence type="ECO:0000269" key="9">
    <source>
    </source>
</evidence>
<evidence type="ECO:0000269" key="10">
    <source>
    </source>
</evidence>
<evidence type="ECO:0000305" key="11"/>
<evidence type="ECO:0007744" key="12">
    <source>
        <dbReference type="PDB" id="1FH0"/>
    </source>
</evidence>
<evidence type="ECO:0007744" key="13">
    <source>
        <dbReference type="PDB" id="3H6S"/>
    </source>
</evidence>
<evidence type="ECO:0007744" key="14">
    <source>
        <dbReference type="PDB" id="3KFQ"/>
    </source>
</evidence>
<evidence type="ECO:0007829" key="15">
    <source>
        <dbReference type="PDB" id="1FH0"/>
    </source>
</evidence>
<evidence type="ECO:0007829" key="16">
    <source>
        <dbReference type="PDB" id="7QGW"/>
    </source>
</evidence>
<organism>
    <name type="scientific">Homo sapiens</name>
    <name type="common">Human</name>
    <dbReference type="NCBI Taxonomy" id="9606"/>
    <lineage>
        <taxon>Eukaryota</taxon>
        <taxon>Metazoa</taxon>
        <taxon>Chordata</taxon>
        <taxon>Craniata</taxon>
        <taxon>Vertebrata</taxon>
        <taxon>Euteleostomi</taxon>
        <taxon>Mammalia</taxon>
        <taxon>Eutheria</taxon>
        <taxon>Euarchontoglires</taxon>
        <taxon>Primates</taxon>
        <taxon>Haplorrhini</taxon>
        <taxon>Catarrhini</taxon>
        <taxon>Hominidae</taxon>
        <taxon>Homo</taxon>
    </lineage>
</organism>
<accession>O60911</accession>
<accession>O60233</accession>
<accession>Q2TB86</accession>
<accession>Q5T1U0</accession>
<proteinExistence type="evidence at protein level"/>
<comment type="function">
    <text evidence="5 10">Cysteine protease. May have an important role in corneal physiology.</text>
</comment>
<comment type="catalytic activity">
    <reaction evidence="5">
        <text>The recombinant enzyme hydrolyzes proteins (serum albumin, collagen) and synthetic substrates (Z-Phe-Arg-NHMec &gt; Z-Leu-Arg-NHMec &gt; Z-Val-Arg-NHMec).</text>
        <dbReference type="EC" id="3.4.22.43"/>
    </reaction>
</comment>
<comment type="activity regulation">
    <text evidence="8">Inhibited by CST6.</text>
</comment>
<comment type="interaction">
    <interactant intactId="EBI-1549974">
        <id>O60911</id>
    </interactant>
    <interactant intactId="EBI-1220160">
        <id>P07711</id>
        <label>CTSL</label>
    </interactant>
    <organismsDiffer>false</organismsDiffer>
    <experiments>3</experiments>
</comment>
<comment type="subcellular location">
    <subcellularLocation>
        <location evidence="11">Lysosome</location>
    </subcellularLocation>
</comment>
<comment type="tissue specificity">
    <text evidence="5 9 10">Predominantly expressed in the thymus and testis. Also expressed in corneal epithelium, and to a lesser extent in conjunctival epithelium and skin.</text>
</comment>
<comment type="similarity">
    <text evidence="2 3 4">Belongs to the peptidase C1 family.</text>
</comment>
<keyword id="KW-0002">3D-structure</keyword>
<keyword id="KW-1015">Disulfide bond</keyword>
<keyword id="KW-0325">Glycoprotein</keyword>
<keyword id="KW-0378">Hydrolase</keyword>
<keyword id="KW-0458">Lysosome</keyword>
<keyword id="KW-0645">Protease</keyword>
<keyword id="KW-1267">Proteomics identification</keyword>
<keyword id="KW-1185">Reference proteome</keyword>
<keyword id="KW-0732">Signal</keyword>
<keyword id="KW-0788">Thiol protease</keyword>
<keyword id="KW-0865">Zymogen</keyword>
<sequence>MNLSLVLAAFCLGIASAVPKFDQNLDTKWYQWKATHRRLYGANEEGWRRAVWEKNMKMIELHNGEYSQGKHGFTMAMNAFGDMTNEEFRQMMGCFRNQKFRKGKVFREPLFLDLPKSVDWRKKGYVTPVKNQKQCGSCWAFSATGALEGQMFRKTGKLVSLSEQNLVDCSRPQGNQGCNGGFMARAFQYVKENGGLDSEESYPYVAVDEICKYRPENSVANDTGFTVVAPGKEKALMKAVATVGPISVAMDAGHSSFQFYKSGIYFEPDCSSKNLDHGVLVVGYGFEGANSNNSKYWLVKNSWGPEWGSNGYVKIAKDKNNHCGIATAASYPNV</sequence>
<dbReference type="EC" id="3.4.22.43"/>
<dbReference type="EMBL" id="Y14734">
    <property type="protein sequence ID" value="CAA75029.1"/>
    <property type="molecule type" value="mRNA"/>
</dbReference>
<dbReference type="EMBL" id="AB001928">
    <property type="protein sequence ID" value="BAA25909.1"/>
    <property type="molecule type" value="mRNA"/>
</dbReference>
<dbReference type="EMBL" id="AF070448">
    <property type="protein sequence ID" value="AAC23598.1"/>
    <property type="molecule type" value="mRNA"/>
</dbReference>
<dbReference type="EMBL" id="AB019534">
    <property type="protein sequence ID" value="BAA34365.1"/>
    <property type="molecule type" value="Genomic_DNA"/>
</dbReference>
<dbReference type="EMBL" id="AY358641">
    <property type="protein sequence ID" value="AAQ89004.1"/>
    <property type="molecule type" value="mRNA"/>
</dbReference>
<dbReference type="EMBL" id="AL445670">
    <property type="status" value="NOT_ANNOTATED_CDS"/>
    <property type="molecule type" value="Genomic_DNA"/>
</dbReference>
<dbReference type="EMBL" id="BC023504">
    <property type="protein sequence ID" value="AAH23504.1"/>
    <property type="molecule type" value="mRNA"/>
</dbReference>
<dbReference type="EMBL" id="BC110512">
    <property type="protein sequence ID" value="AAI10513.1"/>
    <property type="molecule type" value="mRNA"/>
</dbReference>
<dbReference type="CCDS" id="CCDS6723.1"/>
<dbReference type="RefSeq" id="NP_001188504.1">
    <property type="nucleotide sequence ID" value="NM_001201575.2"/>
</dbReference>
<dbReference type="RefSeq" id="NP_001324.2">
    <property type="nucleotide sequence ID" value="NM_001333.3"/>
</dbReference>
<dbReference type="PDB" id="1FH0">
    <property type="method" value="X-ray"/>
    <property type="resolution" value="1.60 A"/>
    <property type="chains" value="A/B=114-334"/>
</dbReference>
<dbReference type="PDB" id="3H6S">
    <property type="method" value="X-ray"/>
    <property type="resolution" value="2.22 A"/>
    <property type="chains" value="A/B/C/D=114-334"/>
</dbReference>
<dbReference type="PDB" id="3KFQ">
    <property type="method" value="X-ray"/>
    <property type="resolution" value="1.99 A"/>
    <property type="chains" value="A/B=114-334"/>
</dbReference>
<dbReference type="PDB" id="7PK4">
    <property type="method" value="X-ray"/>
    <property type="resolution" value="1.92 A"/>
    <property type="chains" value="A=113-334"/>
</dbReference>
<dbReference type="PDB" id="7Q8D">
    <property type="method" value="X-ray"/>
    <property type="resolution" value="1.80 A"/>
    <property type="chains" value="AA/BA=114-334"/>
</dbReference>
<dbReference type="PDB" id="7Q8F">
    <property type="method" value="X-ray"/>
    <property type="resolution" value="1.49 A"/>
    <property type="chains" value="AA/BA=114-334"/>
</dbReference>
<dbReference type="PDB" id="7Q8G">
    <property type="method" value="X-ray"/>
    <property type="resolution" value="2.06 A"/>
    <property type="chains" value="AA/BA=113-334"/>
</dbReference>
<dbReference type="PDB" id="7Q8H">
    <property type="method" value="X-ray"/>
    <property type="resolution" value="1.75 A"/>
    <property type="chains" value="AA/BA=114-334"/>
</dbReference>
<dbReference type="PDB" id="7Q8I">
    <property type="method" value="X-ray"/>
    <property type="resolution" value="1.59 A"/>
    <property type="chains" value="AA/BA=113-334"/>
</dbReference>
<dbReference type="PDB" id="7Q8J">
    <property type="method" value="X-ray"/>
    <property type="resolution" value="1.64 A"/>
    <property type="chains" value="AA/BA=113-334"/>
</dbReference>
<dbReference type="PDB" id="7Q8K">
    <property type="method" value="X-ray"/>
    <property type="resolution" value="1.74 A"/>
    <property type="chains" value="AA/BA=114-334"/>
</dbReference>
<dbReference type="PDB" id="7Q8L">
    <property type="method" value="X-ray"/>
    <property type="resolution" value="1.80 A"/>
    <property type="chains" value="AA/BA=113-334"/>
</dbReference>
<dbReference type="PDB" id="7Q8M">
    <property type="method" value="X-ray"/>
    <property type="resolution" value="1.57 A"/>
    <property type="chains" value="AA/BA=113-334"/>
</dbReference>
<dbReference type="PDB" id="7Q8N">
    <property type="method" value="X-ray"/>
    <property type="resolution" value="2.00 A"/>
    <property type="chains" value="AA/BA=113-334"/>
</dbReference>
<dbReference type="PDB" id="7Q8O">
    <property type="method" value="X-ray"/>
    <property type="resolution" value="1.90 A"/>
    <property type="chains" value="AA/BA=114-334"/>
</dbReference>
<dbReference type="PDB" id="7Q8P">
    <property type="method" value="X-ray"/>
    <property type="resolution" value="1.71 A"/>
    <property type="chains" value="AA/BA=113-334"/>
</dbReference>
<dbReference type="PDB" id="7Q8Q">
    <property type="method" value="X-ray"/>
    <property type="resolution" value="2.13 A"/>
    <property type="chains" value="AA/BA=114-334"/>
</dbReference>
<dbReference type="PDB" id="7Q9H">
    <property type="method" value="X-ray"/>
    <property type="resolution" value="1.40 A"/>
    <property type="chains" value="AA/BA=114-334"/>
</dbReference>
<dbReference type="PDB" id="7QFF">
    <property type="method" value="X-ray"/>
    <property type="resolution" value="1.50 A"/>
    <property type="chains" value="AA/BA=114-334"/>
</dbReference>
<dbReference type="PDB" id="7QFH">
    <property type="method" value="X-ray"/>
    <property type="resolution" value="1.52 A"/>
    <property type="chains" value="AA/BA=114-334"/>
</dbReference>
<dbReference type="PDB" id="7QGW">
    <property type="method" value="X-ray"/>
    <property type="resolution" value="1.30 A"/>
    <property type="chains" value="A/B=114-334"/>
</dbReference>
<dbReference type="PDB" id="7QHJ">
    <property type="method" value="X-ray"/>
    <property type="resolution" value="1.40 A"/>
    <property type="chains" value="AA/BA=114-334"/>
</dbReference>
<dbReference type="PDB" id="7QHK">
    <property type="method" value="X-ray"/>
    <property type="resolution" value="1.83 A"/>
    <property type="chains" value="AA/BA=114-334"/>
</dbReference>
<dbReference type="PDB" id="7QNS">
    <property type="method" value="X-ray"/>
    <property type="resolution" value="1.40 A"/>
    <property type="chains" value="AA/BA=113-334"/>
</dbReference>
<dbReference type="PDB" id="7QO2">
    <property type="method" value="X-ray"/>
    <property type="resolution" value="1.77 A"/>
    <property type="chains" value="AA/BA=113-334"/>
</dbReference>
<dbReference type="PDBsum" id="1FH0"/>
<dbReference type="PDBsum" id="3H6S"/>
<dbReference type="PDBsum" id="3KFQ"/>
<dbReference type="PDBsum" id="7PK4"/>
<dbReference type="PDBsum" id="7Q8D"/>
<dbReference type="PDBsum" id="7Q8F"/>
<dbReference type="PDBsum" id="7Q8G"/>
<dbReference type="PDBsum" id="7Q8H"/>
<dbReference type="PDBsum" id="7Q8I"/>
<dbReference type="PDBsum" id="7Q8J"/>
<dbReference type="PDBsum" id="7Q8K"/>
<dbReference type="PDBsum" id="7Q8L"/>
<dbReference type="PDBsum" id="7Q8M"/>
<dbReference type="PDBsum" id="7Q8N"/>
<dbReference type="PDBsum" id="7Q8O"/>
<dbReference type="PDBsum" id="7Q8P"/>
<dbReference type="PDBsum" id="7Q8Q"/>
<dbReference type="PDBsum" id="7Q9H"/>
<dbReference type="PDBsum" id="7QFF"/>
<dbReference type="PDBsum" id="7QFH"/>
<dbReference type="PDBsum" id="7QGW"/>
<dbReference type="PDBsum" id="7QHJ"/>
<dbReference type="PDBsum" id="7QHK"/>
<dbReference type="PDBsum" id="7QNS"/>
<dbReference type="PDBsum" id="7QO2"/>
<dbReference type="SMR" id="O60911"/>
<dbReference type="BioGRID" id="107895">
    <property type="interactions" value="148"/>
</dbReference>
<dbReference type="FunCoup" id="O60911">
    <property type="interactions" value="669"/>
</dbReference>
<dbReference type="IntAct" id="O60911">
    <property type="interactions" value="97"/>
</dbReference>
<dbReference type="MINT" id="O60911"/>
<dbReference type="STRING" id="9606.ENSP00000259470"/>
<dbReference type="BindingDB" id="O60911"/>
<dbReference type="ChEMBL" id="CHEMBL3272"/>
<dbReference type="DrugBank" id="DB02869">
    <property type="generic name" value="3-amino-5-phenylpentane"/>
</dbReference>
<dbReference type="DrugBank" id="DB04451">
    <property type="generic name" value="4-Methylpiperazin-1-Yl Carbonyl Group"/>
</dbReference>
<dbReference type="DrugCentral" id="O60911"/>
<dbReference type="GuidetoPHARMACOLOGY" id="2352"/>
<dbReference type="MEROPS" id="C01.009"/>
<dbReference type="MEROPS" id="I29.010"/>
<dbReference type="GlyCosmos" id="O60911">
    <property type="glycosylation" value="2 sites, No reported glycans"/>
</dbReference>
<dbReference type="GlyGen" id="O60911">
    <property type="glycosylation" value="2 sites, 5 N-linked glycans (2 sites)"/>
</dbReference>
<dbReference type="iPTMnet" id="O60911"/>
<dbReference type="PhosphoSitePlus" id="O60911"/>
<dbReference type="BioMuta" id="CTSV"/>
<dbReference type="jPOST" id="O60911"/>
<dbReference type="MassIVE" id="O60911"/>
<dbReference type="PaxDb" id="9606-ENSP00000445052"/>
<dbReference type="PeptideAtlas" id="O60911"/>
<dbReference type="ProteomicsDB" id="49669"/>
<dbReference type="Pumba" id="O60911"/>
<dbReference type="Antibodypedia" id="28731">
    <property type="antibodies" value="371 antibodies from 33 providers"/>
</dbReference>
<dbReference type="DNASU" id="1515"/>
<dbReference type="Ensembl" id="ENST00000259470.6">
    <property type="protein sequence ID" value="ENSP00000259470.5"/>
    <property type="gene ID" value="ENSG00000136943.12"/>
</dbReference>
<dbReference type="Ensembl" id="ENST00000679661.1">
    <property type="protein sequence ID" value="ENSP00000506713.1"/>
    <property type="gene ID" value="ENSG00000136943.12"/>
</dbReference>
<dbReference type="Ensembl" id="ENST00000681737.1">
    <property type="protein sequence ID" value="ENSP00000505681.1"/>
    <property type="gene ID" value="ENSG00000136943.12"/>
</dbReference>
<dbReference type="Ensembl" id="ENST00000681927.1">
    <property type="protein sequence ID" value="ENSP00000505141.1"/>
    <property type="gene ID" value="ENSG00000136943.12"/>
</dbReference>
<dbReference type="GeneID" id="1515"/>
<dbReference type="KEGG" id="hsa:1515"/>
<dbReference type="MANE-Select" id="ENST00000259470.6">
    <property type="protein sequence ID" value="ENSP00000259470.5"/>
    <property type="RefSeq nucleotide sequence ID" value="NM_001333.4"/>
    <property type="RefSeq protein sequence ID" value="NP_001324.2"/>
</dbReference>
<dbReference type="UCSC" id="uc004awt.4">
    <property type="organism name" value="human"/>
</dbReference>
<dbReference type="AGR" id="HGNC:2538"/>
<dbReference type="CTD" id="1515"/>
<dbReference type="DisGeNET" id="1515"/>
<dbReference type="GeneCards" id="CTSV"/>
<dbReference type="HGNC" id="HGNC:2538">
    <property type="gene designation" value="CTSV"/>
</dbReference>
<dbReference type="HPA" id="ENSG00000136943">
    <property type="expression patterns" value="Tissue enriched (lymphoid)"/>
</dbReference>
<dbReference type="MIM" id="603308">
    <property type="type" value="gene"/>
</dbReference>
<dbReference type="neXtProt" id="NX_O60911"/>
<dbReference type="OpenTargets" id="ENSG00000136943"/>
<dbReference type="PharmGKB" id="PA27036"/>
<dbReference type="VEuPathDB" id="HostDB:ENSG00000136943"/>
<dbReference type="eggNOG" id="KOG1543">
    <property type="taxonomic scope" value="Eukaryota"/>
</dbReference>
<dbReference type="GeneTree" id="ENSGT00940000154367"/>
<dbReference type="HOGENOM" id="CLU_012184_1_2_1"/>
<dbReference type="InParanoid" id="O60911"/>
<dbReference type="OMA" id="HNGEYSE"/>
<dbReference type="OrthoDB" id="10253408at2759"/>
<dbReference type="PAN-GO" id="O60911">
    <property type="GO annotations" value="5 GO annotations based on evolutionary models"/>
</dbReference>
<dbReference type="PhylomeDB" id="O60911"/>
<dbReference type="TreeFam" id="TF313739"/>
<dbReference type="BRENDA" id="3.4.22.43">
    <property type="organism ID" value="2681"/>
</dbReference>
<dbReference type="PathwayCommons" id="O60911"/>
<dbReference type="Reactome" id="R-HSA-1236977">
    <property type="pathway name" value="Endosomal/Vacuolar pathway"/>
</dbReference>
<dbReference type="Reactome" id="R-HSA-1474228">
    <property type="pathway name" value="Degradation of the extracellular matrix"/>
</dbReference>
<dbReference type="Reactome" id="R-HSA-1592389">
    <property type="pathway name" value="Activation of Matrix Metalloproteinases"/>
</dbReference>
<dbReference type="Reactome" id="R-HSA-1679131">
    <property type="pathway name" value="Trafficking and processing of endosomal TLR"/>
</dbReference>
<dbReference type="Reactome" id="R-HSA-2022090">
    <property type="pathway name" value="Assembly of collagen fibrils and other multimeric structures"/>
</dbReference>
<dbReference type="Reactome" id="R-HSA-2132295">
    <property type="pathway name" value="MHC class II antigen presentation"/>
</dbReference>
<dbReference type="Reactome" id="R-HSA-8939242">
    <property type="pathway name" value="RUNX1 regulates transcription of genes involved in differentiation of keratinocytes"/>
</dbReference>
<dbReference type="SABIO-RK" id="O60911"/>
<dbReference type="SignaLink" id="O60911"/>
<dbReference type="BioGRID-ORCS" id="1515">
    <property type="hits" value="13 hits in 1146 CRISPR screens"/>
</dbReference>
<dbReference type="ChiTaRS" id="CTSV">
    <property type="organism name" value="human"/>
</dbReference>
<dbReference type="EvolutionaryTrace" id="O60911"/>
<dbReference type="GeneWiki" id="Cathepsin_L2"/>
<dbReference type="GenomeRNAi" id="1515"/>
<dbReference type="Pharos" id="O60911">
    <property type="development level" value="Tchem"/>
</dbReference>
<dbReference type="PRO" id="PR:O60911"/>
<dbReference type="Proteomes" id="UP000005640">
    <property type="component" value="Chromosome 9"/>
</dbReference>
<dbReference type="RNAct" id="O60911">
    <property type="molecule type" value="protein"/>
</dbReference>
<dbReference type="Bgee" id="ENSG00000136943">
    <property type="expression patterns" value="Expressed in thymus and 169 other cell types or tissues"/>
</dbReference>
<dbReference type="ExpressionAtlas" id="O60911">
    <property type="expression patterns" value="baseline and differential"/>
</dbReference>
<dbReference type="GO" id="GO:0005576">
    <property type="term" value="C:extracellular region"/>
    <property type="evidence" value="ECO:0000304"/>
    <property type="project" value="Reactome"/>
</dbReference>
<dbReference type="GO" id="GO:0005615">
    <property type="term" value="C:extracellular space"/>
    <property type="evidence" value="ECO:0000318"/>
    <property type="project" value="GO_Central"/>
</dbReference>
<dbReference type="GO" id="GO:0043202">
    <property type="term" value="C:lysosomal lumen"/>
    <property type="evidence" value="ECO:0000304"/>
    <property type="project" value="Reactome"/>
</dbReference>
<dbReference type="GO" id="GO:0005764">
    <property type="term" value="C:lysosome"/>
    <property type="evidence" value="ECO:0000318"/>
    <property type="project" value="GO_Central"/>
</dbReference>
<dbReference type="GO" id="GO:0004197">
    <property type="term" value="F:cysteine-type endopeptidase activity"/>
    <property type="evidence" value="ECO:0000318"/>
    <property type="project" value="GO_Central"/>
</dbReference>
<dbReference type="GO" id="GO:0008234">
    <property type="term" value="F:cysteine-type peptidase activity"/>
    <property type="evidence" value="ECO:0000314"/>
    <property type="project" value="ARUK-UCL"/>
</dbReference>
<dbReference type="GO" id="GO:0004252">
    <property type="term" value="F:serine-type endopeptidase activity"/>
    <property type="evidence" value="ECO:0000304"/>
    <property type="project" value="Reactome"/>
</dbReference>
<dbReference type="GO" id="GO:0019886">
    <property type="term" value="P:antigen processing and presentation of exogenous peptide antigen via MHC class II"/>
    <property type="evidence" value="ECO:0000304"/>
    <property type="project" value="Reactome"/>
</dbReference>
<dbReference type="GO" id="GO:0022617">
    <property type="term" value="P:extracellular matrix disassembly"/>
    <property type="evidence" value="ECO:0000304"/>
    <property type="project" value="Reactome"/>
</dbReference>
<dbReference type="GO" id="GO:0051603">
    <property type="term" value="P:proteolysis involved in protein catabolic process"/>
    <property type="evidence" value="ECO:0000318"/>
    <property type="project" value="GO_Central"/>
</dbReference>
<dbReference type="CDD" id="cd02248">
    <property type="entry name" value="Peptidase_C1A"/>
    <property type="match status" value="1"/>
</dbReference>
<dbReference type="FunFam" id="1.10.287.2250:FF:000003">
    <property type="entry name" value="Cathepsin L"/>
    <property type="match status" value="1"/>
</dbReference>
<dbReference type="FunFam" id="3.90.70.10:FF:000332">
    <property type="entry name" value="Cathepsin L1"/>
    <property type="match status" value="1"/>
</dbReference>
<dbReference type="Gene3D" id="3.90.70.10">
    <property type="entry name" value="Cysteine proteinases"/>
    <property type="match status" value="1"/>
</dbReference>
<dbReference type="InterPro" id="IPR038765">
    <property type="entry name" value="Papain-like_cys_pep_sf"/>
</dbReference>
<dbReference type="InterPro" id="IPR025661">
    <property type="entry name" value="Pept_asp_AS"/>
</dbReference>
<dbReference type="InterPro" id="IPR000169">
    <property type="entry name" value="Pept_cys_AS"/>
</dbReference>
<dbReference type="InterPro" id="IPR025660">
    <property type="entry name" value="Pept_his_AS"/>
</dbReference>
<dbReference type="InterPro" id="IPR013128">
    <property type="entry name" value="Peptidase_C1A"/>
</dbReference>
<dbReference type="InterPro" id="IPR000668">
    <property type="entry name" value="Peptidase_C1A_C"/>
</dbReference>
<dbReference type="InterPro" id="IPR039417">
    <property type="entry name" value="Peptidase_C1A_papain-like"/>
</dbReference>
<dbReference type="InterPro" id="IPR013201">
    <property type="entry name" value="Prot_inhib_I29"/>
</dbReference>
<dbReference type="PANTHER" id="PTHR12411">
    <property type="entry name" value="CYSTEINE PROTEASE FAMILY C1-RELATED"/>
    <property type="match status" value="1"/>
</dbReference>
<dbReference type="Pfam" id="PF08246">
    <property type="entry name" value="Inhibitor_I29"/>
    <property type="match status" value="1"/>
</dbReference>
<dbReference type="Pfam" id="PF00112">
    <property type="entry name" value="Peptidase_C1"/>
    <property type="match status" value="1"/>
</dbReference>
<dbReference type="PRINTS" id="PR00705">
    <property type="entry name" value="PAPAIN"/>
</dbReference>
<dbReference type="SMART" id="SM00848">
    <property type="entry name" value="Inhibitor_I29"/>
    <property type="match status" value="1"/>
</dbReference>
<dbReference type="SMART" id="SM00645">
    <property type="entry name" value="Pept_C1"/>
    <property type="match status" value="1"/>
</dbReference>
<dbReference type="SUPFAM" id="SSF54001">
    <property type="entry name" value="Cysteine proteinases"/>
    <property type="match status" value="1"/>
</dbReference>
<dbReference type="PROSITE" id="PS00640">
    <property type="entry name" value="THIOL_PROTEASE_ASN"/>
    <property type="match status" value="1"/>
</dbReference>
<dbReference type="PROSITE" id="PS00139">
    <property type="entry name" value="THIOL_PROTEASE_CYS"/>
    <property type="match status" value="1"/>
</dbReference>
<dbReference type="PROSITE" id="PS00639">
    <property type="entry name" value="THIOL_PROTEASE_HIS"/>
    <property type="match status" value="1"/>
</dbReference>
<protein>
    <recommendedName>
        <fullName>Cathepsin L2</fullName>
        <ecNumber>3.4.22.43</ecNumber>
    </recommendedName>
    <alternativeName>
        <fullName>Cathepsin U</fullName>
    </alternativeName>
    <alternativeName>
        <fullName>Cathepsin V</fullName>
    </alternativeName>
</protein>
<gene>
    <name type="primary">CTSV</name>
    <name type="synonym">CATL2</name>
    <name type="synonym">CTSL2</name>
    <name type="synonym">CTSU</name>
    <name type="ORF">UNQ268/PRO305</name>
</gene>
<feature type="signal peptide" evidence="1">
    <location>
        <begin position="1"/>
        <end position="17"/>
    </location>
</feature>
<feature type="propeptide" id="PRO_0000026277" description="Activation peptide">
    <location>
        <begin position="18"/>
        <end position="113"/>
    </location>
</feature>
<feature type="chain" id="PRO_0000026278" description="Cathepsin L2">
    <location>
        <begin position="114"/>
        <end position="334"/>
    </location>
</feature>
<feature type="active site" evidence="6">
    <location>
        <position position="138"/>
    </location>
</feature>
<feature type="active site" evidence="6">
    <location>
        <position position="277"/>
    </location>
</feature>
<feature type="active site" evidence="6">
    <location>
        <position position="301"/>
    </location>
</feature>
<feature type="glycosylation site" description="N-linked (GlcNAc...) asparagine" evidence="7">
    <location>
        <position position="221"/>
    </location>
</feature>
<feature type="glycosylation site" description="N-linked (GlcNAc...) asparagine" evidence="7">
    <location>
        <position position="292"/>
    </location>
</feature>
<feature type="disulfide bond" evidence="6 12 13 14">
    <location>
        <begin position="135"/>
        <end position="178"/>
    </location>
</feature>
<feature type="disulfide bond" evidence="6 12 13 14">
    <location>
        <begin position="169"/>
        <end position="211"/>
    </location>
</feature>
<feature type="disulfide bond" evidence="6 12 13 14">
    <location>
        <begin position="270"/>
        <end position="323"/>
    </location>
</feature>
<feature type="sequence conflict" description="In Ref. 1; CAA75029." evidence="11" ref="1">
    <original>G</original>
    <variation>P</variation>
    <location>
        <position position="81"/>
    </location>
</feature>
<feature type="helix" evidence="16">
    <location>
        <begin position="120"/>
        <end position="123"/>
    </location>
</feature>
<feature type="strand" evidence="16">
    <location>
        <begin position="134"/>
        <end position="136"/>
    </location>
</feature>
<feature type="helix" evidence="16">
    <location>
        <begin position="138"/>
        <end position="155"/>
    </location>
</feature>
<feature type="helix" evidence="16">
    <location>
        <begin position="163"/>
        <end position="169"/>
    </location>
</feature>
<feature type="turn" evidence="16">
    <location>
        <begin position="171"/>
        <end position="174"/>
    </location>
</feature>
<feature type="helix" evidence="15">
    <location>
        <begin position="177"/>
        <end position="179"/>
    </location>
</feature>
<feature type="helix" evidence="16">
    <location>
        <begin position="183"/>
        <end position="193"/>
    </location>
</feature>
<feature type="strand" evidence="16">
    <location>
        <begin position="196"/>
        <end position="198"/>
    </location>
</feature>
<feature type="turn" evidence="16">
    <location>
        <begin position="199"/>
        <end position="201"/>
    </location>
</feature>
<feature type="helix" evidence="16">
    <location>
        <begin position="215"/>
        <end position="217"/>
    </location>
</feature>
<feature type="strand" evidence="16">
    <location>
        <begin position="218"/>
        <end position="220"/>
    </location>
</feature>
<feature type="strand" evidence="16">
    <location>
        <begin position="225"/>
        <end position="227"/>
    </location>
</feature>
<feature type="helix" evidence="16">
    <location>
        <begin position="233"/>
        <end position="242"/>
    </location>
</feature>
<feature type="strand" evidence="16">
    <location>
        <begin position="246"/>
        <end position="250"/>
    </location>
</feature>
<feature type="helix" evidence="16">
    <location>
        <begin position="255"/>
        <end position="258"/>
    </location>
</feature>
<feature type="strand" evidence="16">
    <location>
        <begin position="262"/>
        <end position="265"/>
    </location>
</feature>
<feature type="strand" evidence="16">
    <location>
        <begin position="272"/>
        <end position="274"/>
    </location>
</feature>
<feature type="strand" evidence="16">
    <location>
        <begin position="277"/>
        <end position="285"/>
    </location>
</feature>
<feature type="strand" evidence="16">
    <location>
        <begin position="287"/>
        <end position="289"/>
    </location>
</feature>
<feature type="strand" evidence="16">
    <location>
        <begin position="296"/>
        <end position="300"/>
    </location>
</feature>
<feature type="strand" evidence="16">
    <location>
        <begin position="312"/>
        <end position="316"/>
    </location>
</feature>
<feature type="strand" evidence="16">
    <location>
        <begin position="318"/>
        <end position="321"/>
    </location>
</feature>
<feature type="helix" evidence="16">
    <location>
        <begin position="322"/>
        <end position="324"/>
    </location>
</feature>
<feature type="turn" evidence="16">
    <location>
        <begin position="325"/>
        <end position="327"/>
    </location>
</feature>
<feature type="strand" evidence="16">
    <location>
        <begin position="330"/>
        <end position="332"/>
    </location>
</feature>